<reference key="1">
    <citation type="journal article" date="1990" name="FEBS Lett.">
        <title>Cloning and structure of cDNA encoding alpha-latrotoxin from black widow spider venom.</title>
        <authorList>
            <person name="Kiyatkin N.I."/>
            <person name="Dulubova I.E."/>
            <person name="Chekhovskaya I.A."/>
            <person name="Grishin E.V."/>
        </authorList>
    </citation>
    <scope>NUCLEOTIDE SEQUENCE [MRNA]</scope>
    <source>
        <tissue>Venom gland</tissue>
    </source>
</reference>
<reference key="2">
    <citation type="journal article" date="1998" name="EMBO J.">
        <title>Alpha-latrotoxin action probed with recombinant toxin: receptors recruit alpha-latrotoxin but do not transduce an exocytotic signal.</title>
        <authorList>
            <person name="Ichtchenko K."/>
            <person name="Khvotchev M."/>
            <person name="Kiyatkin N."/>
            <person name="Simpson L."/>
            <person name="Sugita S."/>
            <person name="Suedhof T.C."/>
        </authorList>
    </citation>
    <scope>NUCLEOTIDE SEQUENCE [MRNA] OF 21-1197</scope>
    <scope>FUNCTION</scope>
    <scope>MUTAGENESIS OF CYS-34; CYS-91; CYS-413 AND LEU-448</scope>
    <scope>RECOMBINANT EXPRESSION</scope>
    <source>
        <tissue>Venom gland</tissue>
    </source>
</reference>
<reference key="3">
    <citation type="journal article" date="1991" name="Bioorg. Khim.">
        <title>Structure of tryptic fragments of a neurotoxin from black widow spider venom.</title>
        <authorList>
            <person name="Volkova T.M."/>
            <person name="Galkina T.G."/>
            <person name="Kudelin A.B."/>
            <person name="Nazimov I.V."/>
            <person name="Grishin E.V."/>
        </authorList>
    </citation>
    <scope>PARTIAL PROTEIN SEQUENCE</scope>
    <scope>SUBCELLULAR LOCATION</scope>
    <source>
        <tissue>Venom</tissue>
    </source>
</reference>
<reference key="4">
    <citation type="journal article" date="1998" name="Toxicon">
        <title>Black widow spider toxins: the present and the future.</title>
        <authorList>
            <person name="Grishin E.V."/>
        </authorList>
    </citation>
    <scope>PROTEIN SEQUENCE OF 21-39</scope>
    <scope>TOXIC DOSE</scope>
    <scope>SUBCELLULAR LOCATION</scope>
</reference>
<reference key="5">
    <citation type="journal article" date="1995" name="J. Biol. Chem.">
        <title>High affinity binding of alpha-latrotoxin to recombinant neurexin I alpha.</title>
        <authorList>
            <person name="Davletov B.A."/>
            <person name="Krasnoperov V."/>
            <person name="Hata Y."/>
            <person name="Petrenko A.G."/>
            <person name="Suedhof T.C."/>
        </authorList>
    </citation>
    <scope>FUNCTION</scope>
    <scope>ALPHA-LATROTOXIN RECEPTOR</scope>
</reference>
<reference key="6">
    <citation type="journal article" date="1996" name="J. Biol. Chem.">
        <title>Isolation and biochemical characterization of a Ca2+-independent alpha-latrotoxin-binding protein.</title>
        <authorList>
            <person name="Davletov B.A."/>
            <person name="Shamotienko O.G."/>
            <person name="Lelianova V.G."/>
            <person name="Grishin E.V."/>
            <person name="Ushkaryov Y.A."/>
        </authorList>
    </citation>
    <scope>FUNCTION</scope>
    <scope>ALPHA-LATROTOXIN RECEPTOR</scope>
</reference>
<reference key="7">
    <citation type="journal article" date="2000" name="Biochimie">
        <title>Tetramerisation of alpha-latrotoxin by divalent cations is responsible for toxin-induced non-vesicular release and contributes to the Ca(2+)-dependent vesicular exocytosis from synaptosomes.</title>
        <authorList>
            <person name="Ashton A.C."/>
            <person name="Rahman M.A."/>
            <person name="Volynski K.E."/>
            <person name="Manser C."/>
            <person name="Orlova E.V."/>
            <person name="Matsushita H."/>
            <person name="Davletov B.A."/>
            <person name="van Heel M."/>
            <person name="Grishin E.V."/>
            <person name="Ushkaryov Y.A."/>
        </authorList>
    </citation>
    <scope>SUBUNIT</scope>
    <scope>SUBCELLULAR LOCATION</scope>
</reference>
<reference key="8">
    <citation type="journal article" date="2000" name="Biochimie">
        <title>Characterization of the epitope for 4C4.1 mAb on alpha-latrotoxin using phage display-peptide libraries: prevention of toxin-dependent 45Ca(2+) uptake in non-neuronal human embryonic cells transiently expressing latrophilin.</title>
        <authorList>
            <person name="Pescatori M."/>
            <person name="Grasso A."/>
        </authorList>
    </citation>
    <scope>EPITOPE FOR 4C4.1 MONOCLONAL ANTIBODY</scope>
</reference>
<reference key="9">
    <citation type="journal article" date="2001" name="J. Biol. Chem.">
        <title>alpha-latrotoxin, acting via two Ca2+-dependent pathways, triggers exocytosis of two pools of synaptic vesicles.</title>
        <authorList>
            <person name="Ashton A.C."/>
            <person name="Volynski K.E."/>
            <person name="Lelianova V.G."/>
            <person name="Orlova E.V."/>
            <person name="Van Renterghem C."/>
            <person name="Canepari M."/>
            <person name="Seagar M."/>
            <person name="Ushkaryov Y.A."/>
        </authorList>
    </citation>
    <scope>FUNCTION</scope>
    <scope>SUBUNIT</scope>
</reference>
<reference key="10">
    <citation type="journal article" date="2002" name="J. Biol. Chem.">
        <title>Protein-tyrosine phosphatase-sigma is a novel member of the functional family of alpha-latrotoxin receptors.</title>
        <authorList>
            <person name="Krasnoperov V."/>
            <person name="Bittner M.A."/>
            <person name="Mo W."/>
            <person name="Buryanovsky L."/>
            <person name="Neubert T.A."/>
            <person name="Holz R.W."/>
            <person name="Ichtchenko K."/>
            <person name="Petrenko A.G."/>
        </authorList>
    </citation>
    <scope>FUNCTION</scope>
    <scope>ALPHA-LATROTOXIN RECEPTOR</scope>
</reference>
<reference key="11">
    <citation type="journal article" date="2003" name="J. Neurosci.">
        <title>The alpha-latrotoxin mutant LTXN4C enhances spontaneous and evoked transmitter release in CA3 pyramidal neurons.</title>
        <authorList>
            <person name="Capogna M."/>
            <person name="Volynski K.E."/>
            <person name="Emptage N.J."/>
            <person name="Ushkaryov Y.A."/>
        </authorList>
    </citation>
    <scope>FUNCTION</scope>
</reference>
<reference key="12">
    <citation type="journal article" date="2011" name="Toxins">
        <title>Alpha-latrotoxin rescues SNAP-25 from BoNT/A-mediated proteolysis in embryonic stem cell-derived neurons.</title>
        <authorList>
            <person name="Mesngon M."/>
            <person name="McNutt P."/>
        </authorList>
    </citation>
    <scope>BIOTECHNOLOGY</scope>
</reference>
<reference key="13">
    <citation type="journal article" date="2008" name="Handb. Exp. Pharmacol.">
        <title>Alpha-latrotoxin and its receptors.</title>
        <authorList>
            <person name="Ushkaryov Y.A."/>
            <person name="Rohou A."/>
            <person name="Sugita S."/>
        </authorList>
    </citation>
    <scope>REVIEW</scope>
</reference>
<reference key="14">
    <citation type="journal article" date="2009" name="J. Neurochem.">
        <title>Penelope's web: using alpha-latrotoxin to untangle the mysteries of exocytosis.</title>
        <authorList>
            <person name="Silva J.P."/>
            <person name="Suckling J."/>
            <person name="Ushkaryov Y."/>
        </authorList>
    </citation>
    <scope>REVIEW</scope>
    <scope>BIOTECHNOLOGY</scope>
</reference>
<reference key="15">
    <citation type="journal article" date="2000" name="Nat. Struct. Biol.">
        <title>Structure of alpha-latrotoxin oligomers reveals that divalent cation-dependent tetramers form membrane pores.</title>
        <authorList>
            <person name="Orlova E.V."/>
            <person name="Rahman M.A."/>
            <person name="Gowen B."/>
            <person name="Volynski K.E."/>
            <person name="Ashton A.C."/>
            <person name="Manser C."/>
            <person name="van Heel M."/>
            <person name="Ushkaryov Y.A."/>
        </authorList>
    </citation>
    <scope>STRUCTURE BY ELECTRON MICROSCOPY</scope>
    <scope>PROBABLE DISULFIDE BOND</scope>
    <scope>SUBUNIT</scope>
</reference>
<evidence type="ECO:0000250" key="1">
    <source>
        <dbReference type="UniProtKB" id="P0DJE4"/>
    </source>
</evidence>
<evidence type="ECO:0000250" key="2">
    <source>
        <dbReference type="UniProtKB" id="Q9XZC0"/>
    </source>
</evidence>
<evidence type="ECO:0000255" key="3"/>
<evidence type="ECO:0000269" key="4">
    <source>
    </source>
</evidence>
<evidence type="ECO:0000269" key="5">
    <source>
    </source>
</evidence>
<evidence type="ECO:0000269" key="6">
    <source>
    </source>
</evidence>
<evidence type="ECO:0000269" key="7">
    <source>
    </source>
</evidence>
<evidence type="ECO:0000269" key="8">
    <source>
    </source>
</evidence>
<evidence type="ECO:0000269" key="9">
    <source>
    </source>
</evidence>
<evidence type="ECO:0000269" key="10">
    <source>
    </source>
</evidence>
<evidence type="ECO:0000269" key="11">
    <source>
    </source>
</evidence>
<evidence type="ECO:0000269" key="12">
    <source>
    </source>
</evidence>
<evidence type="ECO:0000269" key="13">
    <source>
    </source>
</evidence>
<evidence type="ECO:0000303" key="14">
    <source>
    </source>
</evidence>
<evidence type="ECO:0000305" key="15"/>
<evidence type="ECO:0000305" key="16">
    <source>
    </source>
</evidence>
<evidence type="ECO:0000305" key="17">
    <source>
    </source>
</evidence>
<evidence type="ECO:0000305" key="18">
    <source>
    </source>
</evidence>
<evidence type="ECO:0000305" key="19">
    <source>
    </source>
</evidence>
<evidence type="ECO:0007829" key="20">
    <source>
        <dbReference type="PDB" id="9GO9"/>
    </source>
</evidence>
<keyword id="KW-0002">3D-structure</keyword>
<keyword id="KW-0040">ANK repeat</keyword>
<keyword id="KW-0165">Cleavage on pair of basic residues</keyword>
<keyword id="KW-0903">Direct protein sequencing</keyword>
<keyword id="KW-1015">Disulfide bond</keyword>
<keyword id="KW-0268">Exocytosis</keyword>
<keyword id="KW-1213">G-protein coupled receptor impairing toxin</keyword>
<keyword id="KW-0472">Membrane</keyword>
<keyword id="KW-0528">Neurotoxin</keyword>
<keyword id="KW-0638">Presynaptic neurotoxin</keyword>
<keyword id="KW-0677">Repeat</keyword>
<keyword id="KW-0964">Secreted</keyword>
<keyword id="KW-0732">Signal</keyword>
<keyword id="KW-1052">Target cell membrane</keyword>
<keyword id="KW-1053">Target membrane</keyword>
<keyword id="KW-0800">Toxin</keyword>
<keyword id="KW-0812">Transmembrane</keyword>
<feature type="signal peptide" evidence="12">
    <location>
        <begin position="1"/>
        <end position="20"/>
    </location>
</feature>
<feature type="chain" id="PRO_0000001615" description="Alpha-latrotoxin-Lt1a">
    <location>
        <begin position="21"/>
        <end position="1199"/>
    </location>
</feature>
<feature type="propeptide" id="PRO_0000391352" evidence="15">
    <location>
        <begin position="1200"/>
        <end position="1401"/>
    </location>
</feature>
<feature type="repeat" description="ANK 1" evidence="3">
    <location>
        <begin position="458"/>
        <end position="489"/>
    </location>
</feature>
<feature type="repeat" description="ANK 2" evidence="3">
    <location>
        <begin position="490"/>
        <end position="521"/>
    </location>
</feature>
<feature type="repeat" description="ANK 3" evidence="3">
    <location>
        <begin position="525"/>
        <end position="554"/>
    </location>
</feature>
<feature type="repeat" description="ANK 4" evidence="3">
    <location>
        <begin position="559"/>
        <end position="589"/>
    </location>
</feature>
<feature type="repeat" description="ANK 5" evidence="3">
    <location>
        <begin position="593"/>
        <end position="622"/>
    </location>
</feature>
<feature type="repeat" description="ANK 6" evidence="3">
    <location>
        <begin position="626"/>
        <end position="656"/>
    </location>
</feature>
<feature type="repeat" description="ANK 7" evidence="3">
    <location>
        <begin position="660"/>
        <end position="690"/>
    </location>
</feature>
<feature type="repeat" description="ANK 8" evidence="3">
    <location>
        <begin position="695"/>
        <end position="723"/>
    </location>
</feature>
<feature type="repeat" description="ANK 9" evidence="3">
    <location>
        <begin position="729"/>
        <end position="758"/>
    </location>
</feature>
<feature type="repeat" description="ANK 10" evidence="3">
    <location>
        <begin position="762"/>
        <end position="791"/>
    </location>
</feature>
<feature type="repeat" description="ANK 11" evidence="3">
    <location>
        <begin position="795"/>
        <end position="824"/>
    </location>
</feature>
<feature type="repeat" description="ANK 12" evidence="3">
    <location>
        <begin position="828"/>
        <end position="857"/>
    </location>
</feature>
<feature type="repeat" description="ANK 13" evidence="3">
    <location>
        <begin position="862"/>
        <end position="891"/>
    </location>
</feature>
<feature type="repeat" description="ANK 14" evidence="3">
    <location>
        <begin position="895"/>
        <end position="924"/>
    </location>
</feature>
<feature type="repeat" description="ANK 15" evidence="3">
    <location>
        <begin position="928"/>
        <end position="957"/>
    </location>
</feature>
<feature type="repeat" description="ANK 16" evidence="3">
    <location>
        <begin position="971"/>
        <end position="1003"/>
    </location>
</feature>
<feature type="repeat" description="ANK 17" evidence="3">
    <location>
        <begin position="1004"/>
        <end position="1033"/>
    </location>
</feature>
<feature type="repeat" description="ANK 18" evidence="3">
    <location>
        <begin position="1035"/>
        <end position="1064"/>
    </location>
</feature>
<feature type="repeat" description="ANK 19" evidence="3">
    <location>
        <begin position="1068"/>
        <end position="1097"/>
    </location>
</feature>
<feature type="repeat" description="ANK 20" evidence="3">
    <location>
        <begin position="1101"/>
        <end position="1131"/>
    </location>
</feature>
<feature type="repeat" description="ANK 21" evidence="3">
    <location>
        <begin position="1137"/>
        <end position="1166"/>
    </location>
</feature>
<feature type="repeat" description="ANK 22" evidence="3">
    <location>
        <begin position="1170"/>
        <end position="1199"/>
    </location>
</feature>
<feature type="region of interest" description="Furin-like endopeptidase recognition region">
    <location>
        <begin position="17"/>
        <end position="20"/>
    </location>
</feature>
<feature type="region of interest" description="Helix H8 is the probable transmembrane region of the tetrameric pore inserted in the target cell membrane" evidence="2">
    <location>
        <begin position="238"/>
        <end position="257"/>
    </location>
</feature>
<feature type="region of interest" description="4C4.1 epitope">
    <location>
        <begin position="1026"/>
        <end position="1032"/>
    </location>
</feature>
<feature type="region of interest" description="Furin-like endopeptidase recognition region">
    <location>
        <begin position="1196"/>
        <end position="1199"/>
    </location>
</feature>
<feature type="disulfide bond" evidence="16">
    <location>
        <begin position="413"/>
        <end position="1066"/>
    </location>
</feature>
<feature type="mutagenesis site" description="Loss of function." evidence="13">
    <original>C</original>
    <variation>S</variation>
    <location>
        <position position="34"/>
    </location>
</feature>
<feature type="mutagenesis site" description="Loss of function." evidence="13">
    <original>C</original>
    <variation>S</variation>
    <location>
        <position position="91"/>
    </location>
</feature>
<feature type="mutagenesis site" description="Loss of function." evidence="13">
    <original>C</original>
    <variation>S</variation>
    <location>
        <position position="413"/>
    </location>
</feature>
<feature type="mutagenesis site" description="Loss of function (loss the ability of pore-formation), but retains the full binding affinity to receptors (mutant LTXN4C)." evidence="13">
    <original>L</original>
    <variation>LVPRG</variation>
    <location>
        <position position="448"/>
    </location>
</feature>
<feature type="sequence conflict" description="In Ref. 2; AAC78471." evidence="15" ref="2">
    <original>A</original>
    <variation>V</variation>
    <location>
        <position position="60"/>
    </location>
</feature>
<feature type="sequence conflict" description="In Ref. 2; AAC78471." evidence="15" ref="2">
    <original>E</original>
    <variation>K</variation>
    <location>
        <position position="148"/>
    </location>
</feature>
<feature type="sequence conflict" description="In Ref. 2; AAC78471." evidence="15" ref="2">
    <original>I</original>
    <variation>V</variation>
    <location>
        <position position="162"/>
    </location>
</feature>
<feature type="sequence conflict" description="In Ref. 2; AAC78471." evidence="15" ref="2">
    <original>F</original>
    <variation>L</variation>
    <location>
        <position position="201"/>
    </location>
</feature>
<feature type="sequence conflict" description="In Ref. 2; AAC78471." evidence="15" ref="2">
    <original>S</original>
    <variation>A</variation>
    <location>
        <position position="467"/>
    </location>
</feature>
<feature type="sequence conflict" description="In Ref. 2; AAC78471." evidence="15" ref="2">
    <original>V</original>
    <variation>L</variation>
    <location>
        <position position="690"/>
    </location>
</feature>
<feature type="sequence conflict" description="In Ref. 2; AAC78471." evidence="15" ref="2">
    <original>L</original>
    <variation>I</variation>
    <location>
        <position position="783"/>
    </location>
</feature>
<feature type="sequence conflict" description="In Ref. 2; AAC78471." evidence="15" ref="2">
    <original>I</original>
    <variation>V</variation>
    <location>
        <position position="879"/>
    </location>
</feature>
<feature type="sequence conflict" description="In Ref. 2; AAC78471." evidence="15" ref="2">
    <original>H</original>
    <variation>D</variation>
    <location>
        <position position="1116"/>
    </location>
</feature>
<feature type="turn" evidence="20">
    <location>
        <begin position="27"/>
        <end position="29"/>
    </location>
</feature>
<feature type="helix" evidence="20">
    <location>
        <begin position="30"/>
        <end position="35"/>
    </location>
</feature>
<feature type="helix" evidence="20">
    <location>
        <begin position="37"/>
        <end position="48"/>
    </location>
</feature>
<feature type="helix" evidence="20">
    <location>
        <begin position="50"/>
        <end position="53"/>
    </location>
</feature>
<feature type="helix" evidence="20">
    <location>
        <begin position="57"/>
        <end position="64"/>
    </location>
</feature>
<feature type="helix" evidence="20">
    <location>
        <begin position="67"/>
        <end position="78"/>
    </location>
</feature>
<feature type="helix" evidence="20">
    <location>
        <begin position="84"/>
        <end position="89"/>
    </location>
</feature>
<feature type="turn" evidence="20">
    <location>
        <begin position="90"/>
        <end position="92"/>
    </location>
</feature>
<feature type="helix" evidence="20">
    <location>
        <begin position="96"/>
        <end position="115"/>
    </location>
</feature>
<feature type="helix" evidence="20">
    <location>
        <begin position="119"/>
        <end position="150"/>
    </location>
</feature>
<feature type="turn" evidence="20">
    <location>
        <begin position="156"/>
        <end position="158"/>
    </location>
</feature>
<feature type="helix" evidence="20">
    <location>
        <begin position="159"/>
        <end position="180"/>
    </location>
</feature>
<feature type="helix" evidence="20">
    <location>
        <begin position="184"/>
        <end position="191"/>
    </location>
</feature>
<feature type="strand" evidence="20">
    <location>
        <begin position="192"/>
        <end position="195"/>
    </location>
</feature>
<feature type="helix" evidence="20">
    <location>
        <begin position="197"/>
        <end position="202"/>
    </location>
</feature>
<feature type="helix" evidence="20">
    <location>
        <begin position="213"/>
        <end position="222"/>
    </location>
</feature>
<feature type="turn" evidence="20">
    <location>
        <begin position="223"/>
        <end position="225"/>
    </location>
</feature>
<feature type="strand" evidence="20">
    <location>
        <begin position="229"/>
        <end position="231"/>
    </location>
</feature>
<feature type="helix" evidence="20">
    <location>
        <begin position="233"/>
        <end position="270"/>
    </location>
</feature>
<feature type="helix" evidence="20">
    <location>
        <begin position="273"/>
        <end position="294"/>
    </location>
</feature>
<feature type="helix" evidence="20">
    <location>
        <begin position="306"/>
        <end position="318"/>
    </location>
</feature>
<feature type="strand" evidence="20">
    <location>
        <begin position="320"/>
        <end position="323"/>
    </location>
</feature>
<feature type="helix" evidence="20">
    <location>
        <begin position="327"/>
        <end position="349"/>
    </location>
</feature>
<feature type="strand" evidence="20">
    <location>
        <begin position="363"/>
        <end position="366"/>
    </location>
</feature>
<feature type="strand" evidence="20">
    <location>
        <begin position="373"/>
        <end position="375"/>
    </location>
</feature>
<feature type="strand" evidence="20">
    <location>
        <begin position="383"/>
        <end position="390"/>
    </location>
</feature>
<feature type="strand" evidence="20">
    <location>
        <begin position="393"/>
        <end position="395"/>
    </location>
</feature>
<feature type="strand" evidence="20">
    <location>
        <begin position="415"/>
        <end position="417"/>
    </location>
</feature>
<feature type="strand" evidence="20">
    <location>
        <begin position="427"/>
        <end position="433"/>
    </location>
</feature>
<feature type="strand" evidence="20">
    <location>
        <begin position="439"/>
        <end position="444"/>
    </location>
</feature>
<feature type="strand" evidence="20">
    <location>
        <begin position="450"/>
        <end position="452"/>
    </location>
</feature>
<feature type="helix" evidence="20">
    <location>
        <begin position="455"/>
        <end position="462"/>
    </location>
</feature>
<feature type="helix" evidence="20">
    <location>
        <begin position="467"/>
        <end position="479"/>
    </location>
</feature>
<feature type="helix" evidence="20">
    <location>
        <begin position="494"/>
        <end position="501"/>
    </location>
</feature>
<feature type="helix" evidence="20">
    <location>
        <begin position="504"/>
        <end position="511"/>
    </location>
</feature>
<feature type="helix" evidence="20">
    <location>
        <begin position="516"/>
        <end position="519"/>
    </location>
</feature>
<feature type="helix" evidence="20">
    <location>
        <begin position="529"/>
        <end position="535"/>
    </location>
</feature>
<feature type="helix" evidence="20">
    <location>
        <begin position="539"/>
        <end position="548"/>
    </location>
</feature>
<feature type="turn" evidence="20">
    <location>
        <begin position="557"/>
        <end position="559"/>
    </location>
</feature>
<feature type="helix" evidence="20">
    <location>
        <begin position="563"/>
        <end position="570"/>
    </location>
</feature>
<feature type="helix" evidence="20">
    <location>
        <begin position="573"/>
        <end position="579"/>
    </location>
</feature>
<feature type="helix" evidence="20">
    <location>
        <begin position="597"/>
        <end position="604"/>
    </location>
</feature>
<feature type="helix" evidence="20">
    <location>
        <begin position="606"/>
        <end position="614"/>
    </location>
</feature>
<feature type="helix" evidence="20">
    <location>
        <begin position="630"/>
        <end position="636"/>
    </location>
</feature>
<feature type="helix" evidence="20">
    <location>
        <begin position="640"/>
        <end position="648"/>
    </location>
</feature>
<feature type="helix" evidence="20">
    <location>
        <begin position="664"/>
        <end position="671"/>
    </location>
</feature>
<feature type="helix" evidence="20">
    <location>
        <begin position="674"/>
        <end position="681"/>
    </location>
</feature>
<feature type="turn" evidence="20">
    <location>
        <begin position="693"/>
        <end position="695"/>
    </location>
</feature>
<feature type="helix" evidence="20">
    <location>
        <begin position="699"/>
        <end position="706"/>
    </location>
</feature>
<feature type="helix" evidence="20">
    <location>
        <begin position="709"/>
        <end position="716"/>
    </location>
</feature>
<feature type="helix" evidence="20">
    <location>
        <begin position="733"/>
        <end position="739"/>
    </location>
</feature>
<feature type="helix" evidence="20">
    <location>
        <begin position="743"/>
        <end position="752"/>
    </location>
</feature>
<feature type="helix" evidence="20">
    <location>
        <begin position="766"/>
        <end position="772"/>
    </location>
</feature>
<feature type="helix" evidence="20">
    <location>
        <begin position="778"/>
        <end position="785"/>
    </location>
</feature>
<feature type="helix" evidence="20">
    <location>
        <begin position="799"/>
        <end position="806"/>
    </location>
</feature>
<feature type="helix" evidence="20">
    <location>
        <begin position="809"/>
        <end position="816"/>
    </location>
</feature>
<feature type="turn" evidence="20">
    <location>
        <begin position="817"/>
        <end position="819"/>
    </location>
</feature>
<feature type="helix" evidence="20">
    <location>
        <begin position="832"/>
        <end position="839"/>
    </location>
</feature>
<feature type="helix" evidence="20">
    <location>
        <begin position="842"/>
        <end position="851"/>
    </location>
</feature>
<feature type="helix" evidence="20">
    <location>
        <begin position="866"/>
        <end position="873"/>
    </location>
</feature>
<feature type="helix" evidence="20">
    <location>
        <begin position="876"/>
        <end position="885"/>
    </location>
</feature>
<feature type="helix" evidence="20">
    <location>
        <begin position="899"/>
        <end position="906"/>
    </location>
</feature>
<feature type="helix" evidence="20">
    <location>
        <begin position="909"/>
        <end position="916"/>
    </location>
</feature>
<feature type="helix" evidence="20">
    <location>
        <begin position="932"/>
        <end position="939"/>
    </location>
</feature>
<feature type="helix" evidence="20">
    <location>
        <begin position="942"/>
        <end position="947"/>
    </location>
</feature>
<feature type="helix" evidence="20">
    <location>
        <begin position="948"/>
        <end position="951"/>
    </location>
</feature>
<feature type="turn" evidence="20">
    <location>
        <begin position="952"/>
        <end position="954"/>
    </location>
</feature>
<feature type="turn" evidence="20">
    <location>
        <begin position="963"/>
        <end position="967"/>
    </location>
</feature>
<feature type="strand" evidence="20">
    <location>
        <begin position="968"/>
        <end position="971"/>
    </location>
</feature>
<feature type="helix" evidence="20">
    <location>
        <begin position="976"/>
        <end position="985"/>
    </location>
</feature>
<feature type="helix" evidence="20">
    <location>
        <begin position="989"/>
        <end position="998"/>
    </location>
</feature>
<feature type="strand" evidence="20">
    <location>
        <begin position="1003"/>
        <end position="1005"/>
    </location>
</feature>
<feature type="helix" evidence="20">
    <location>
        <begin position="1007"/>
        <end position="1014"/>
    </location>
</feature>
<feature type="helix" evidence="20">
    <location>
        <begin position="1017"/>
        <end position="1027"/>
    </location>
</feature>
<feature type="strand" evidence="20">
    <location>
        <begin position="1034"/>
        <end position="1036"/>
    </location>
</feature>
<feature type="helix" evidence="20">
    <location>
        <begin position="1039"/>
        <end position="1046"/>
    </location>
</feature>
<feature type="helix" evidence="20">
    <location>
        <begin position="1049"/>
        <end position="1057"/>
    </location>
</feature>
<feature type="helix" evidence="20">
    <location>
        <begin position="1067"/>
        <end position="1069"/>
    </location>
</feature>
<feature type="helix" evidence="20">
    <location>
        <begin position="1072"/>
        <end position="1079"/>
    </location>
</feature>
<feature type="helix" evidence="20">
    <location>
        <begin position="1082"/>
        <end position="1090"/>
    </location>
</feature>
<feature type="strand" evidence="20">
    <location>
        <begin position="1095"/>
        <end position="1097"/>
    </location>
</feature>
<feature type="strand" evidence="20">
    <location>
        <begin position="1100"/>
        <end position="1102"/>
    </location>
</feature>
<feature type="helix" evidence="20">
    <location>
        <begin position="1105"/>
        <end position="1111"/>
    </location>
</feature>
<feature type="helix" evidence="20">
    <location>
        <begin position="1117"/>
        <end position="1124"/>
    </location>
</feature>
<feature type="strand" evidence="20">
    <location>
        <begin position="1127"/>
        <end position="1129"/>
    </location>
</feature>
<feature type="helix" evidence="20">
    <location>
        <begin position="1141"/>
        <end position="1148"/>
    </location>
</feature>
<feature type="helix" evidence="20">
    <location>
        <begin position="1151"/>
        <end position="1160"/>
    </location>
</feature>
<feature type="helix" evidence="20">
    <location>
        <begin position="1174"/>
        <end position="1180"/>
    </location>
</feature>
<feature type="helix" evidence="20">
    <location>
        <begin position="1187"/>
        <end position="1193"/>
    </location>
</feature>
<name>LATA_LATTR</name>
<accession>P23631</accession>
<accession>O76456</accession>
<accession>Q25328</accession>
<organism>
    <name type="scientific">Latrodectus tredecimguttatus</name>
    <name type="common">Mediterranean black widow spider</name>
    <name type="synonym">Latrodectus mactans tredecimguttatus</name>
    <dbReference type="NCBI Taxonomy" id="6925"/>
    <lineage>
        <taxon>Eukaryota</taxon>
        <taxon>Metazoa</taxon>
        <taxon>Ecdysozoa</taxon>
        <taxon>Arthropoda</taxon>
        <taxon>Chelicerata</taxon>
        <taxon>Arachnida</taxon>
        <taxon>Araneae</taxon>
        <taxon>Araneomorphae</taxon>
        <taxon>Entelegynae</taxon>
        <taxon>Araneoidea</taxon>
        <taxon>Theridiidae</taxon>
        <taxon>Latrodectus</taxon>
    </lineage>
</organism>
<protein>
    <recommendedName>
        <fullName evidence="15">Alpha-latrotoxin-Lt1a</fullName>
        <shortName evidence="15">Alpha-LTX-Lt1a</shortName>
    </recommendedName>
    <alternativeName>
        <fullName evidence="14">Alpha-latrotoxin</fullName>
        <shortName evidence="14">Alpha-LTX</shortName>
    </alternativeName>
</protein>
<comment type="function">
    <text evidence="6 7 8 10 11 13">Presynaptic neurotoxin that causes massive release of neurotransmitters from vertebrate (but not invertebrate) nerve terminals and endocrine cells via a complex mechanism involving activation of receptor(s) and toxin insertion into the plasma membrane with subsequent pore formation. Binds to neurexin-1-alpha (NRXN1) in a calcium dependent manner, adhesion G protein-coupled receptor L1 (ADGRL1, also termed latrophilin-1 and calcium-independent receptor of latrotoxin (CIRL)), and receptor-type tyrosine-protein phosphatase S (PTPRS), also termed PTP sigma (PubMed:12110683, PubMed:7592578, PubMed:8798521). NRXN1 and PTPRS are suggested to provide a platform for binding and subsequent pore formation events (PubMed:11572875, PubMed:9799228). In contrast, binding to ADGRL1 does not involve oligomerization and channel formation, but direct downstream stimulation of the synaptic fusion machinery (PubMed:12764091).</text>
</comment>
<comment type="subunit">
    <text evidence="4 5 6">Homotetramer in membranes.</text>
</comment>
<comment type="subcellular location">
    <subcellularLocation>
        <location evidence="9 12">Secreted</location>
    </subcellularLocation>
    <subcellularLocation>
        <location evidence="4 5">Target cell membrane</location>
    </subcellularLocation>
    <text evidence="4 5">Forms a membrane channel in the prey.</text>
</comment>
<comment type="tissue specificity">
    <text evidence="1">Expressed in venom gland, cephalothorax, and abdomen tissues from both males and females.</text>
</comment>
<comment type="developmental stage">
    <text evidence="1">Expressed in all life stages examined, including adults, spiderlings and eggs.</text>
</comment>
<comment type="domain">
    <text evidence="2">The H8 helix is predicted to insert into membranes and form pores by assembling into tetramers. The helix is contained within a helical bundle domain that undergoes significant conformational changes during pore formation to allow exposure of the H8 transmembrane helix and transition of the toxin from a soluble monomer to a transmembrane tetramer.</text>
</comment>
<comment type="PTM">
    <text>Processed by furin-like proteases at both the N- and C-termini.</text>
</comment>
<comment type="toxic dose">
    <text evidence="12">LD(50)is 20 ug/kg by subcutaneous injection into mice.</text>
</comment>
<comment type="biotechnology">
    <text evidence="18">Is an essentiel tool for stimulating exocytosis and study its mechanisms. Its mutant LTXN4C, which is unable to insert into membranes and form pores, plays a key role in understanding the dual mode of action of the wild-type toxin.</text>
</comment>
<comment type="biotechnology">
    <text evidence="19">May be used to antagonize botulinum neurotoxin poisoning and attenuate the neuromuscular paralysis via synapse remodeling.</text>
</comment>
<comment type="miscellaneous">
    <text>Is the main neurotoxin responsible for the human envenomation syndrome known as latrodectism that results from bites by Latrodectus species.</text>
</comment>
<comment type="miscellaneous">
    <text evidence="17">Anti-alpha-LTX monoclonal antibody 4C4.1 blocks neurotransmitter release induced by this protein by preventing tetramerization and ionophore activity once inserted into cell membranes. However, 4C4.1 is incapable of reversing pore formation (PubMed:11086220).</text>
</comment>
<comment type="similarity">
    <text evidence="15">Belongs to the cationic peptide 01 (latrotoxin) family. 03 (alpha-latrotoxin) subfamily.</text>
</comment>
<dbReference type="EMBL" id="X55009">
    <property type="protein sequence ID" value="CAA38753.1"/>
    <property type="molecule type" value="mRNA"/>
</dbReference>
<dbReference type="EMBL" id="AF069521">
    <property type="protein sequence ID" value="AAC78471.1"/>
    <property type="molecule type" value="mRNA"/>
</dbReference>
<dbReference type="PDB" id="9GO9">
    <property type="method" value="EM"/>
    <property type="resolution" value="2.70 A"/>
    <property type="chains" value="A/B/C/D=1-1401"/>
</dbReference>
<dbReference type="PDB" id="9GOA">
    <property type="method" value="EM"/>
    <property type="resolution" value="3.20 A"/>
    <property type="chains" value="A/B/C/D=21-1195"/>
</dbReference>
<dbReference type="PDBsum" id="9GO9"/>
<dbReference type="PDBsum" id="9GOA"/>
<dbReference type="EMDB" id="EMD-51465"/>
<dbReference type="EMDB" id="EMD-51467"/>
<dbReference type="EMDB" id="EMD-51468"/>
<dbReference type="EMDB" id="EMD-51469"/>
<dbReference type="EMDB" id="EMD-51472"/>
<dbReference type="EMDB" id="EMD-51473"/>
<dbReference type="EMDB" id="EMD-51474"/>
<dbReference type="EMDB" id="EMD-51475"/>
<dbReference type="EMDB" id="EMD-51476"/>
<dbReference type="EMDB" id="EMD-51479"/>
<dbReference type="EMDB" id="EMD-51484"/>
<dbReference type="EMDB" id="EMD-51485"/>
<dbReference type="EMDB" id="EMD-51488"/>
<dbReference type="EMDB" id="EMD-51490"/>
<dbReference type="EMDB" id="EMD-51492"/>
<dbReference type="EMDB" id="EMD-51494"/>
<dbReference type="EMDB" id="EMD-51495"/>
<dbReference type="SMR" id="P23631"/>
<dbReference type="TCDB" id="1.C.63.1.1">
    <property type="family name" value="the Alpha-latrotoxin (latrotoxin) family"/>
</dbReference>
<dbReference type="ArachnoServer" id="AS000060">
    <property type="toxin name" value="alpha-Latrotoxin-Lt1a"/>
</dbReference>
<dbReference type="PRO" id="PR:P23631"/>
<dbReference type="GO" id="GO:0005576">
    <property type="term" value="C:extracellular region"/>
    <property type="evidence" value="ECO:0007669"/>
    <property type="project" value="UniProtKB-SubCell"/>
</dbReference>
<dbReference type="GO" id="GO:0044231">
    <property type="term" value="C:host cell presynaptic membrane"/>
    <property type="evidence" value="ECO:0007669"/>
    <property type="project" value="UniProtKB-KW"/>
</dbReference>
<dbReference type="GO" id="GO:0016020">
    <property type="term" value="C:membrane"/>
    <property type="evidence" value="ECO:0007669"/>
    <property type="project" value="UniProtKB-KW"/>
</dbReference>
<dbReference type="GO" id="GO:0044218">
    <property type="term" value="C:other organism cell membrane"/>
    <property type="evidence" value="ECO:0007669"/>
    <property type="project" value="UniProtKB-KW"/>
</dbReference>
<dbReference type="GO" id="GO:0090729">
    <property type="term" value="F:toxin activity"/>
    <property type="evidence" value="ECO:0007669"/>
    <property type="project" value="UniProtKB-KW"/>
</dbReference>
<dbReference type="GO" id="GO:0006887">
    <property type="term" value="P:exocytosis"/>
    <property type="evidence" value="ECO:0007669"/>
    <property type="project" value="UniProtKB-KW"/>
</dbReference>
<dbReference type="Gene3D" id="1.25.40.20">
    <property type="entry name" value="Ankyrin repeat-containing domain"/>
    <property type="match status" value="5"/>
</dbReference>
<dbReference type="InterPro" id="IPR002110">
    <property type="entry name" value="Ankyrin_rpt"/>
</dbReference>
<dbReference type="InterPro" id="IPR036770">
    <property type="entry name" value="Ankyrin_rpt-contain_sf"/>
</dbReference>
<dbReference type="PANTHER" id="PTHR24198">
    <property type="entry name" value="ANKYRIN REPEAT AND PROTEIN KINASE DOMAIN-CONTAINING PROTEIN"/>
    <property type="match status" value="1"/>
</dbReference>
<dbReference type="PANTHER" id="PTHR24198:SF165">
    <property type="entry name" value="ANKYRIN REPEAT-CONTAINING PROTEIN-RELATED"/>
    <property type="match status" value="1"/>
</dbReference>
<dbReference type="Pfam" id="PF00023">
    <property type="entry name" value="Ank"/>
    <property type="match status" value="1"/>
</dbReference>
<dbReference type="Pfam" id="PF12796">
    <property type="entry name" value="Ank_2"/>
    <property type="match status" value="6"/>
</dbReference>
<dbReference type="Pfam" id="PF13637">
    <property type="entry name" value="Ank_4"/>
    <property type="match status" value="1"/>
</dbReference>
<dbReference type="PRINTS" id="PR01415">
    <property type="entry name" value="ANKYRIN"/>
</dbReference>
<dbReference type="SMART" id="SM00248">
    <property type="entry name" value="ANK"/>
    <property type="match status" value="20"/>
</dbReference>
<dbReference type="SUPFAM" id="SSF48403">
    <property type="entry name" value="Ankyrin repeat"/>
    <property type="match status" value="3"/>
</dbReference>
<dbReference type="PROSITE" id="PS50297">
    <property type="entry name" value="ANK_REP_REGION"/>
    <property type="match status" value="1"/>
</dbReference>
<dbReference type="PROSITE" id="PS50088">
    <property type="entry name" value="ANK_REPEAT"/>
    <property type="match status" value="11"/>
</dbReference>
<sequence length="1401" mass="156857">MISVGEIMERANHSLVRMRREGEDLTLEEKAEICSELELQQKYVDIASNIIGDLSSLPIAGKIAGTIAAAAMTATHVASGRLDIEQTLLGCSDLPFDQIKEVLENRFNEIDRKLDSHSAALEEITKLVEKSISVVEKTRKQMNKRFDEVMKSIQDAKVSPIISKINNFARYFDTEKERIRGLKLNDYILKLEEPNGILLHFKESRTPTDDSLQAPLFSIIEEGYAVPKSIDDELAFKVLYALLYGTQTYVSVMFFLLEQYSFLANHYYEKGYLEKYDEYFNSLNNVFLDFKSSLVGTGTSNNEGLLDRVLQVLMTVKNSEFLGLEKNGVDEMLNEKINLFNKIKEEIEGKQKMTLSETPENFAQISFDKDITTPIGDWRDGREVRYAVQYASETLFSKISHWSDPVSVREKACPTLRMPVDQTRRNVLVFRKFDSSKPQLVGEITPYLSNFIDIDRDLYNAASNPDSAVGFKEFTKLNYDGANIRATFDHGRTVFHAAAKSGNDKIMFGLTFLAKSTELNQPDKKGYTPIHVAADSGNAGIVNLLIQRGVSINSKTYHFLQTPLHLAAQRGFVTTFQRLMESPEININERDKDGFTPLHYAIRGGERILEAFLNQISIDVNAKSNTGLTPFHLAIIKNDWPVASTLLGSKKVDINAVDENNITALHYAAILGYLETTKQLINLKEINANVVSSPGLLSALHYAILYKHDDVASFLMRSSNVNVNLKALGGITPLHLAVIQGRKQILSLMFDIGVNIEQKTDEKYTPLHLAAMSKYPELIQILLDQGSNFEAKTNSGATPLHLATFKGKSQAALILLNNEVNWRDTDENGQMPIHGAAMTGLLDVAQAIISIDATVVDIEDKNSDTPLNLAAQNSHIDVIKYFIDQGADINTRNKKGLAPLLAFSKKGNLDMVKYLFDKNANVYIADNDGMNFFYYAVQNGHLNIVKYAMSEKDKFEWSNTDNNRRDECPNEECAISHFAVCDAVQFDRIEIVKYFVGTLGNFAICGPLHQAARYGHLDIVKYLVEEEFLSVDGSKTDTPLCYASENGHFTVVQYLVSNGAKVNHDCGNGMTAIDKAITKNHLQVVQFLAANGVDFRRKNSRGTTPFLTAVAENALHIAEYLIREKRQDININEQNVDKDTALHLAVYYKNLQMIKLLIKYGIDVTIRNAYDKTALDIAIDAKFSNIVEYLKTKSGKFRREYKSSYGERSLLQTNQISNFIDRKNIEHDHPLFINADNESSELFSKTASNIDVIGTLLLIDVLIRYFSKQGYISKESDSASDGITQAAALSITEKFEDVLNSLHNESAKEQVDLAEVHGKVYAALKSGRNSQIHQILCSSLNSISTLKPEDMEKLESVIMNSHSSVSLPEVTDSANEAYGETLHLFGESCLHSDGILTKKLM</sequence>
<proteinExistence type="evidence at protein level"/>